<comment type="function">
    <text evidence="1">Forms part of the ribosomal stalk which helps the ribosome interact with GTP-bound translation factors.</text>
</comment>
<comment type="subunit">
    <text evidence="1">Part of the ribosomal stalk of the 50S ribosomal subunit. Interacts with L10 and the large rRNA to form the base of the stalk. L10 forms an elongated spine to which L12 dimers bind in a sequential fashion forming a multimeric L10(L12)X complex.</text>
</comment>
<comment type="PTM">
    <text evidence="1">One or more lysine residues are methylated.</text>
</comment>
<comment type="similarity">
    <text evidence="1">Belongs to the universal ribosomal protein uL11 family.</text>
</comment>
<evidence type="ECO:0000255" key="1">
    <source>
        <dbReference type="HAMAP-Rule" id="MF_00736"/>
    </source>
</evidence>
<evidence type="ECO:0000305" key="2"/>
<protein>
    <recommendedName>
        <fullName evidence="1">Large ribosomal subunit protein uL11</fullName>
    </recommendedName>
    <alternativeName>
        <fullName evidence="2">50S ribosomal protein L11</fullName>
    </alternativeName>
</protein>
<keyword id="KW-0488">Methylation</keyword>
<keyword id="KW-1185">Reference proteome</keyword>
<keyword id="KW-0687">Ribonucleoprotein</keyword>
<keyword id="KW-0689">Ribosomal protein</keyword>
<keyword id="KW-0694">RNA-binding</keyword>
<keyword id="KW-0699">rRNA-binding</keyword>
<accession>Q3SSY4</accession>
<sequence>MAKKVTGYLKLQVPAGAANPSPPIGPALGQRGLNIMEFCKAFNAQTQKEEKNTPIPVVITIYADRSFTFEMKTPPMAYFLKQAAKIQSGSKTPGRDAAGTLTRAQVREIAEKKMKDLNCDTVEAAMSMVEGSARSMGLQVAE</sequence>
<feature type="chain" id="PRO_0000258176" description="Large ribosomal subunit protein uL11">
    <location>
        <begin position="1"/>
        <end position="142"/>
    </location>
</feature>
<gene>
    <name evidence="1" type="primary">rplK</name>
    <name type="ordered locus">Nwi_1346</name>
</gene>
<organism>
    <name type="scientific">Nitrobacter winogradskyi (strain ATCC 25391 / DSM 10237 / CIP 104748 / NCIMB 11846 / Nb-255)</name>
    <dbReference type="NCBI Taxonomy" id="323098"/>
    <lineage>
        <taxon>Bacteria</taxon>
        <taxon>Pseudomonadati</taxon>
        <taxon>Pseudomonadota</taxon>
        <taxon>Alphaproteobacteria</taxon>
        <taxon>Hyphomicrobiales</taxon>
        <taxon>Nitrobacteraceae</taxon>
        <taxon>Nitrobacter</taxon>
    </lineage>
</organism>
<dbReference type="EMBL" id="CP000115">
    <property type="protein sequence ID" value="ABA04607.1"/>
    <property type="molecule type" value="Genomic_DNA"/>
</dbReference>
<dbReference type="RefSeq" id="WP_011314625.1">
    <property type="nucleotide sequence ID" value="NC_007406.1"/>
</dbReference>
<dbReference type="SMR" id="Q3SSY4"/>
<dbReference type="STRING" id="323098.Nwi_1346"/>
<dbReference type="KEGG" id="nwi:Nwi_1346"/>
<dbReference type="eggNOG" id="COG0080">
    <property type="taxonomic scope" value="Bacteria"/>
</dbReference>
<dbReference type="HOGENOM" id="CLU_074237_2_1_5"/>
<dbReference type="OrthoDB" id="9802408at2"/>
<dbReference type="Proteomes" id="UP000002531">
    <property type="component" value="Chromosome"/>
</dbReference>
<dbReference type="GO" id="GO:0022625">
    <property type="term" value="C:cytosolic large ribosomal subunit"/>
    <property type="evidence" value="ECO:0007669"/>
    <property type="project" value="TreeGrafter"/>
</dbReference>
<dbReference type="GO" id="GO:0070180">
    <property type="term" value="F:large ribosomal subunit rRNA binding"/>
    <property type="evidence" value="ECO:0007669"/>
    <property type="project" value="UniProtKB-UniRule"/>
</dbReference>
<dbReference type="GO" id="GO:0003735">
    <property type="term" value="F:structural constituent of ribosome"/>
    <property type="evidence" value="ECO:0007669"/>
    <property type="project" value="InterPro"/>
</dbReference>
<dbReference type="GO" id="GO:0006412">
    <property type="term" value="P:translation"/>
    <property type="evidence" value="ECO:0007669"/>
    <property type="project" value="UniProtKB-UniRule"/>
</dbReference>
<dbReference type="CDD" id="cd00349">
    <property type="entry name" value="Ribosomal_L11"/>
    <property type="match status" value="1"/>
</dbReference>
<dbReference type="FunFam" id="1.10.10.250:FF:000001">
    <property type="entry name" value="50S ribosomal protein L11"/>
    <property type="match status" value="1"/>
</dbReference>
<dbReference type="FunFam" id="3.30.1550.10:FF:000001">
    <property type="entry name" value="50S ribosomal protein L11"/>
    <property type="match status" value="1"/>
</dbReference>
<dbReference type="Gene3D" id="1.10.10.250">
    <property type="entry name" value="Ribosomal protein L11, C-terminal domain"/>
    <property type="match status" value="1"/>
</dbReference>
<dbReference type="Gene3D" id="3.30.1550.10">
    <property type="entry name" value="Ribosomal protein L11/L12, N-terminal domain"/>
    <property type="match status" value="1"/>
</dbReference>
<dbReference type="HAMAP" id="MF_00736">
    <property type="entry name" value="Ribosomal_uL11"/>
    <property type="match status" value="1"/>
</dbReference>
<dbReference type="InterPro" id="IPR000911">
    <property type="entry name" value="Ribosomal_uL11"/>
</dbReference>
<dbReference type="InterPro" id="IPR006519">
    <property type="entry name" value="Ribosomal_uL11_bac-typ"/>
</dbReference>
<dbReference type="InterPro" id="IPR020783">
    <property type="entry name" value="Ribosomal_uL11_C"/>
</dbReference>
<dbReference type="InterPro" id="IPR036769">
    <property type="entry name" value="Ribosomal_uL11_C_sf"/>
</dbReference>
<dbReference type="InterPro" id="IPR020784">
    <property type="entry name" value="Ribosomal_uL11_N"/>
</dbReference>
<dbReference type="InterPro" id="IPR036796">
    <property type="entry name" value="Ribosomal_uL11_N_sf"/>
</dbReference>
<dbReference type="NCBIfam" id="TIGR01632">
    <property type="entry name" value="L11_bact"/>
    <property type="match status" value="1"/>
</dbReference>
<dbReference type="PANTHER" id="PTHR11661">
    <property type="entry name" value="60S RIBOSOMAL PROTEIN L12"/>
    <property type="match status" value="1"/>
</dbReference>
<dbReference type="PANTHER" id="PTHR11661:SF1">
    <property type="entry name" value="LARGE RIBOSOMAL SUBUNIT PROTEIN UL11M"/>
    <property type="match status" value="1"/>
</dbReference>
<dbReference type="Pfam" id="PF00298">
    <property type="entry name" value="Ribosomal_L11"/>
    <property type="match status" value="1"/>
</dbReference>
<dbReference type="Pfam" id="PF03946">
    <property type="entry name" value="Ribosomal_L11_N"/>
    <property type="match status" value="1"/>
</dbReference>
<dbReference type="SMART" id="SM00649">
    <property type="entry name" value="RL11"/>
    <property type="match status" value="1"/>
</dbReference>
<dbReference type="SUPFAM" id="SSF54747">
    <property type="entry name" value="Ribosomal L11/L12e N-terminal domain"/>
    <property type="match status" value="1"/>
</dbReference>
<dbReference type="SUPFAM" id="SSF46906">
    <property type="entry name" value="Ribosomal protein L11, C-terminal domain"/>
    <property type="match status" value="1"/>
</dbReference>
<reference key="1">
    <citation type="journal article" date="2006" name="Appl. Environ. Microbiol.">
        <title>Genome sequence of the chemolithoautotrophic nitrite-oxidizing bacterium Nitrobacter winogradskyi Nb-255.</title>
        <authorList>
            <person name="Starkenburg S.R."/>
            <person name="Chain P.S.G."/>
            <person name="Sayavedra-Soto L.A."/>
            <person name="Hauser L."/>
            <person name="Land M.L."/>
            <person name="Larimer F.W."/>
            <person name="Malfatti S.A."/>
            <person name="Klotz M.G."/>
            <person name="Bottomley P.J."/>
            <person name="Arp D.J."/>
            <person name="Hickey W.J."/>
        </authorList>
    </citation>
    <scope>NUCLEOTIDE SEQUENCE [LARGE SCALE GENOMIC DNA]</scope>
    <source>
        <strain>ATCC 25391 / DSM 10237 / CIP 104748 / NCIMB 11846 / Nb-255</strain>
    </source>
</reference>
<name>RL11_NITWN</name>
<proteinExistence type="inferred from homology"/>